<accession>Q8LKP9</accession>
<comment type="function">
    <text evidence="2">Catalyzes the intramolecular cyclization of bicyclic chalcones into tricyclic (S)-flavanones. Responsible for the isomerization of 4,2',4',6'-tetrahydroxychalcone (also termed chalcone) into naringenin.</text>
</comment>
<comment type="catalytic activity">
    <reaction>
        <text>a chalcone = a flavanone.</text>
        <dbReference type="EC" id="5.5.1.6"/>
    </reaction>
</comment>
<comment type="pathway">
    <text>Secondary metabolite biosynthesis; flavonoid biosynthesis.</text>
</comment>
<comment type="miscellaneous">
    <text>Part of the biosynthetic pathway for all classes of flavonoids, a large class of secondary plant metabolites, many of which are brightly colored.</text>
</comment>
<comment type="similarity">
    <text evidence="3">Belongs to the chalcone isomerase family.</text>
</comment>
<gene>
    <name type="primary">CHI</name>
</gene>
<protein>
    <recommendedName>
        <fullName>Chalcone--flavanone isomerase</fullName>
        <shortName>Chalcone isomerase</shortName>
        <ecNumber>5.5.1.6</ecNumber>
    </recommendedName>
</protein>
<keyword id="KW-0284">Flavonoid biosynthesis</keyword>
<keyword id="KW-0413">Isomerase</keyword>
<proteinExistence type="evidence at transcript level"/>
<reference key="1">
    <citation type="journal article" date="2006" name="Phytochemistry">
        <title>Overexpression of the Saussurea medusa chalcone isomerase gene in S. involucrata hairy root cultures enhances their biosynthesis of apigenin.</title>
        <authorList>
            <person name="Li F.-X."/>
            <person name="Jin Z.-P."/>
            <person name="Zhao D.-X."/>
            <person name="Cheng L.-Q."/>
            <person name="Fu C.-X."/>
            <person name="Ma F."/>
        </authorList>
    </citation>
    <scope>NUCLEOTIDE SEQUENCE [MRNA]</scope>
    <scope>FUNCTION</scope>
</reference>
<organism>
    <name type="scientific">Saussurea medusa</name>
    <name type="common">Saw-wort</name>
    <dbReference type="NCBI Taxonomy" id="137893"/>
    <lineage>
        <taxon>Eukaryota</taxon>
        <taxon>Viridiplantae</taxon>
        <taxon>Streptophyta</taxon>
        <taxon>Embryophyta</taxon>
        <taxon>Tracheophyta</taxon>
        <taxon>Spermatophyta</taxon>
        <taxon>Magnoliopsida</taxon>
        <taxon>eudicotyledons</taxon>
        <taxon>Gunneridae</taxon>
        <taxon>Pentapetalae</taxon>
        <taxon>asterids</taxon>
        <taxon>campanulids</taxon>
        <taxon>Asterales</taxon>
        <taxon>Asteraceae</taxon>
        <taxon>Carduoideae</taxon>
        <taxon>Cardueae</taxon>
        <taxon>Saussureinae</taxon>
        <taxon>Saussurea</taxon>
    </lineage>
</organism>
<dbReference type="EC" id="5.5.1.6"/>
<dbReference type="EMBL" id="AF509335">
    <property type="protein sequence ID" value="AAM48130.1"/>
    <property type="molecule type" value="mRNA"/>
</dbReference>
<dbReference type="SMR" id="Q8LKP9"/>
<dbReference type="BRENDA" id="5.5.1.6">
    <property type="organism ID" value="8086"/>
</dbReference>
<dbReference type="UniPathway" id="UPA00154"/>
<dbReference type="GO" id="GO:0045430">
    <property type="term" value="F:chalcone isomerase activity"/>
    <property type="evidence" value="ECO:0007669"/>
    <property type="project" value="UniProtKB-EC"/>
</dbReference>
<dbReference type="GO" id="GO:0009813">
    <property type="term" value="P:flavonoid biosynthetic process"/>
    <property type="evidence" value="ECO:0007669"/>
    <property type="project" value="UniProtKB-UniPathway"/>
</dbReference>
<dbReference type="Gene3D" id="1.10.890.20">
    <property type="match status" value="1"/>
</dbReference>
<dbReference type="Gene3D" id="3.50.70.10">
    <property type="match status" value="1"/>
</dbReference>
<dbReference type="InterPro" id="IPR044164">
    <property type="entry name" value="CFI"/>
</dbReference>
<dbReference type="InterPro" id="IPR016087">
    <property type="entry name" value="Chalcone_isomerase"/>
</dbReference>
<dbReference type="InterPro" id="IPR016088">
    <property type="entry name" value="Chalcone_isomerase_3-sand"/>
</dbReference>
<dbReference type="InterPro" id="IPR016089">
    <property type="entry name" value="Chalcone_isomerase_bundle_sf"/>
</dbReference>
<dbReference type="InterPro" id="IPR036298">
    <property type="entry name" value="Chalcone_isomerase_sf"/>
</dbReference>
<dbReference type="PANTHER" id="PTHR28039:SF8">
    <property type="entry name" value="CHALCONE--FLAVANONE ISOMERASE 1-RELATED"/>
    <property type="match status" value="1"/>
</dbReference>
<dbReference type="PANTHER" id="PTHR28039">
    <property type="entry name" value="CHALCONE--FLAVONONE ISOMERASE 1-RELATED"/>
    <property type="match status" value="1"/>
</dbReference>
<dbReference type="Pfam" id="PF02431">
    <property type="entry name" value="Chalcone"/>
    <property type="match status" value="1"/>
</dbReference>
<dbReference type="SUPFAM" id="SSF54626">
    <property type="entry name" value="Chalcone isomerase"/>
    <property type="match status" value="1"/>
</dbReference>
<evidence type="ECO:0000250" key="1"/>
<evidence type="ECO:0000269" key="2">
    <source>
    </source>
</evidence>
<evidence type="ECO:0000305" key="3"/>
<name>CFI_SAUME</name>
<feature type="chain" id="PRO_0000300849" description="Chalcone--flavanone isomerase">
    <location>
        <begin position="1"/>
        <end position="232"/>
    </location>
</feature>
<feature type="binding site" evidence="1">
    <location>
        <position position="50"/>
    </location>
    <ligand>
        <name>substrate</name>
    </ligand>
</feature>
<feature type="binding site" evidence="1">
    <location>
        <position position="192"/>
    </location>
    <ligand>
        <name>substrate</name>
    </ligand>
</feature>
<feature type="site" description="Important for catalytic activity" evidence="1">
    <location>
        <position position="108"/>
    </location>
</feature>
<sequence length="232" mass="24941">MAPPPSSTSIQVESIVFPPSVKPPGATTTLFLGGAGVRGMEIQGNFVKFTGIGVYLEDKAIPSLAVKWKGKTAAELTDSVQFYRDIVTGPFEKFSQVTMILPLTGKQYSEKVSEMCIGVWKAQGTYTDADTATIEKFLEVFKDENFLPGSSILFTTSPTGSLTISFSKDGNIPEAATVVLENRKLAQTVIESVIGEHGVSPEAKQSLASRLSDFMTQFDEKATANVESQIGL</sequence>